<accession>Q2NHI8</accession>
<organism>
    <name type="scientific">Methanosphaera stadtmanae (strain ATCC 43021 / DSM 3091 / JCM 11832 / MCB-3)</name>
    <dbReference type="NCBI Taxonomy" id="339860"/>
    <lineage>
        <taxon>Archaea</taxon>
        <taxon>Methanobacteriati</taxon>
        <taxon>Methanobacteriota</taxon>
        <taxon>Methanomada group</taxon>
        <taxon>Methanobacteria</taxon>
        <taxon>Methanobacteriales</taxon>
        <taxon>Methanobacteriaceae</taxon>
        <taxon>Methanosphaera</taxon>
    </lineage>
</organism>
<feature type="chain" id="PRO_0000242326" description="Phosphomethylpyrimidine synthase 1">
    <location>
        <begin position="1"/>
        <end position="429"/>
    </location>
</feature>
<feature type="binding site" evidence="1">
    <location>
        <position position="65"/>
    </location>
    <ligand>
        <name>substrate</name>
    </ligand>
</feature>
<feature type="binding site" evidence="1">
    <location>
        <position position="94"/>
    </location>
    <ligand>
        <name>substrate</name>
    </ligand>
</feature>
<feature type="binding site" evidence="1">
    <location>
        <position position="123"/>
    </location>
    <ligand>
        <name>substrate</name>
    </ligand>
</feature>
<feature type="binding site" evidence="1">
    <location>
        <position position="162"/>
    </location>
    <ligand>
        <name>substrate</name>
    </ligand>
</feature>
<feature type="binding site" evidence="1">
    <location>
        <begin position="184"/>
        <end position="186"/>
    </location>
    <ligand>
        <name>substrate</name>
    </ligand>
</feature>
<feature type="binding site" evidence="1">
    <location>
        <begin position="225"/>
        <end position="228"/>
    </location>
    <ligand>
        <name>substrate</name>
    </ligand>
</feature>
<feature type="binding site" evidence="1">
    <location>
        <position position="264"/>
    </location>
    <ligand>
        <name>substrate</name>
    </ligand>
</feature>
<feature type="binding site" evidence="1">
    <location>
        <position position="268"/>
    </location>
    <ligand>
        <name>Zn(2+)</name>
        <dbReference type="ChEBI" id="CHEBI:29105"/>
    </ligand>
</feature>
<feature type="binding site" evidence="1">
    <location>
        <position position="291"/>
    </location>
    <ligand>
        <name>substrate</name>
    </ligand>
</feature>
<feature type="binding site" evidence="1">
    <location>
        <position position="332"/>
    </location>
    <ligand>
        <name>Zn(2+)</name>
        <dbReference type="ChEBI" id="CHEBI:29105"/>
    </ligand>
</feature>
<feature type="binding site" evidence="1">
    <location>
        <position position="408"/>
    </location>
    <ligand>
        <name>[4Fe-4S] cluster</name>
        <dbReference type="ChEBI" id="CHEBI:49883"/>
        <note>4Fe-4S-S-AdoMet</note>
    </ligand>
</feature>
<feature type="binding site" evidence="1">
    <location>
        <position position="411"/>
    </location>
    <ligand>
        <name>[4Fe-4S] cluster</name>
        <dbReference type="ChEBI" id="CHEBI:49883"/>
        <note>4Fe-4S-S-AdoMet</note>
    </ligand>
</feature>
<feature type="binding site" evidence="1">
    <location>
        <position position="415"/>
    </location>
    <ligand>
        <name>[4Fe-4S] cluster</name>
        <dbReference type="ChEBI" id="CHEBI:49883"/>
        <note>4Fe-4S-S-AdoMet</note>
    </ligand>
</feature>
<reference key="1">
    <citation type="journal article" date="2006" name="J. Bacteriol.">
        <title>The genome sequence of Methanosphaera stadtmanae reveals why this human intestinal archaeon is restricted to methanol and H2 for methane formation and ATP synthesis.</title>
        <authorList>
            <person name="Fricke W.F."/>
            <person name="Seedorf H."/>
            <person name="Henne A."/>
            <person name="Kruer M."/>
            <person name="Liesegang H."/>
            <person name="Hedderich R."/>
            <person name="Gottschalk G."/>
            <person name="Thauer R.K."/>
        </authorList>
    </citation>
    <scope>NUCLEOTIDE SEQUENCE [LARGE SCALE GENOMIC DNA]</scope>
    <source>
        <strain>ATCC 43021 / DSM 3091 / JCM 11832 / MCB-3</strain>
    </source>
</reference>
<dbReference type="EC" id="4.1.99.17" evidence="1"/>
<dbReference type="EMBL" id="CP000102">
    <property type="protein sequence ID" value="ABC56645.1"/>
    <property type="molecule type" value="Genomic_DNA"/>
</dbReference>
<dbReference type="SMR" id="Q2NHI8"/>
<dbReference type="STRING" id="339860.Msp_0228"/>
<dbReference type="KEGG" id="mst:Msp_0228"/>
<dbReference type="eggNOG" id="arCOG02741">
    <property type="taxonomic scope" value="Archaea"/>
</dbReference>
<dbReference type="HOGENOM" id="CLU_013181_2_2_2"/>
<dbReference type="OrthoDB" id="335406at2157"/>
<dbReference type="UniPathway" id="UPA00060"/>
<dbReference type="Proteomes" id="UP000001931">
    <property type="component" value="Chromosome"/>
</dbReference>
<dbReference type="GO" id="GO:0051539">
    <property type="term" value="F:4 iron, 4 sulfur cluster binding"/>
    <property type="evidence" value="ECO:0007669"/>
    <property type="project" value="UniProtKB-KW"/>
</dbReference>
<dbReference type="GO" id="GO:0016830">
    <property type="term" value="F:carbon-carbon lyase activity"/>
    <property type="evidence" value="ECO:0007669"/>
    <property type="project" value="InterPro"/>
</dbReference>
<dbReference type="GO" id="GO:0008270">
    <property type="term" value="F:zinc ion binding"/>
    <property type="evidence" value="ECO:0007669"/>
    <property type="project" value="UniProtKB-UniRule"/>
</dbReference>
<dbReference type="GO" id="GO:0009228">
    <property type="term" value="P:thiamine biosynthetic process"/>
    <property type="evidence" value="ECO:0007669"/>
    <property type="project" value="UniProtKB-KW"/>
</dbReference>
<dbReference type="GO" id="GO:0009229">
    <property type="term" value="P:thiamine diphosphate biosynthetic process"/>
    <property type="evidence" value="ECO:0007669"/>
    <property type="project" value="UniProtKB-UniRule"/>
</dbReference>
<dbReference type="FunFam" id="3.20.20.540:FF:000001">
    <property type="entry name" value="Phosphomethylpyrimidine synthase"/>
    <property type="match status" value="1"/>
</dbReference>
<dbReference type="Gene3D" id="6.10.250.620">
    <property type="match status" value="1"/>
</dbReference>
<dbReference type="Gene3D" id="3.20.20.540">
    <property type="entry name" value="Radical SAM ThiC family, central domain"/>
    <property type="match status" value="1"/>
</dbReference>
<dbReference type="HAMAP" id="MF_00089">
    <property type="entry name" value="ThiC"/>
    <property type="match status" value="1"/>
</dbReference>
<dbReference type="InterPro" id="IPR037509">
    <property type="entry name" value="ThiC"/>
</dbReference>
<dbReference type="InterPro" id="IPR038521">
    <property type="entry name" value="ThiC/Bza_core_dom"/>
</dbReference>
<dbReference type="InterPro" id="IPR002817">
    <property type="entry name" value="ThiC/BzaA/B"/>
</dbReference>
<dbReference type="NCBIfam" id="NF009895">
    <property type="entry name" value="PRK13352.1"/>
    <property type="match status" value="1"/>
</dbReference>
<dbReference type="NCBIfam" id="TIGR00190">
    <property type="entry name" value="thiC"/>
    <property type="match status" value="1"/>
</dbReference>
<dbReference type="PANTHER" id="PTHR30557:SF1">
    <property type="entry name" value="PHOSPHOMETHYLPYRIMIDINE SYNTHASE, CHLOROPLASTIC"/>
    <property type="match status" value="1"/>
</dbReference>
<dbReference type="PANTHER" id="PTHR30557">
    <property type="entry name" value="THIAMINE BIOSYNTHESIS PROTEIN THIC"/>
    <property type="match status" value="1"/>
</dbReference>
<dbReference type="Pfam" id="PF01964">
    <property type="entry name" value="ThiC_Rad_SAM"/>
    <property type="match status" value="1"/>
</dbReference>
<dbReference type="SFLD" id="SFLDF00407">
    <property type="entry name" value="phosphomethylpyrimidine_syntha"/>
    <property type="match status" value="1"/>
</dbReference>
<dbReference type="SFLD" id="SFLDG01114">
    <property type="entry name" value="phosphomethylpyrimidine_syntha"/>
    <property type="match status" value="1"/>
</dbReference>
<dbReference type="SFLD" id="SFLDS00113">
    <property type="entry name" value="Radical_SAM_Phosphomethylpyrim"/>
    <property type="match status" value="1"/>
</dbReference>
<keyword id="KW-0004">4Fe-4S</keyword>
<keyword id="KW-0408">Iron</keyword>
<keyword id="KW-0411">Iron-sulfur</keyword>
<keyword id="KW-0456">Lyase</keyword>
<keyword id="KW-0479">Metal-binding</keyword>
<keyword id="KW-1185">Reference proteome</keyword>
<keyword id="KW-0949">S-adenosyl-L-methionine</keyword>
<keyword id="KW-0784">Thiamine biosynthesis</keyword>
<keyword id="KW-0862">Zinc</keyword>
<name>THIC1_METST</name>
<protein>
    <recommendedName>
        <fullName evidence="1">Phosphomethylpyrimidine synthase 1</fullName>
        <ecNumber evidence="1">4.1.99.17</ecNumber>
    </recommendedName>
    <alternativeName>
        <fullName evidence="1">Hydroxymethylpyrimidine phosphate synthase 1</fullName>
        <shortName evidence="1">HMP-P synthase 1</shortName>
        <shortName evidence="1">HMP-phosphate synthase 1</shortName>
        <shortName evidence="1">HMPP synthase 1</shortName>
    </alternativeName>
    <alternativeName>
        <fullName evidence="1">Thiamine biosynthesis protein ThiC 1</fullName>
    </alternativeName>
</protein>
<evidence type="ECO:0000255" key="1">
    <source>
        <dbReference type="HAMAP-Rule" id="MF_00089"/>
    </source>
</evidence>
<comment type="function">
    <text evidence="1">Catalyzes the synthesis of the hydroxymethylpyrimidine phosphate (HMP-P) moiety of thiamine from aminoimidazole ribotide (AIR) in a radical S-adenosyl-L-methionine (SAM)-dependent reaction.</text>
</comment>
<comment type="catalytic activity">
    <reaction evidence="1">
        <text>5-amino-1-(5-phospho-beta-D-ribosyl)imidazole + S-adenosyl-L-methionine = 4-amino-2-methyl-5-(phosphooxymethyl)pyrimidine + CO + 5'-deoxyadenosine + formate + L-methionine + 3 H(+)</text>
        <dbReference type="Rhea" id="RHEA:24840"/>
        <dbReference type="ChEBI" id="CHEBI:15378"/>
        <dbReference type="ChEBI" id="CHEBI:15740"/>
        <dbReference type="ChEBI" id="CHEBI:17245"/>
        <dbReference type="ChEBI" id="CHEBI:17319"/>
        <dbReference type="ChEBI" id="CHEBI:57844"/>
        <dbReference type="ChEBI" id="CHEBI:58354"/>
        <dbReference type="ChEBI" id="CHEBI:59789"/>
        <dbReference type="ChEBI" id="CHEBI:137981"/>
        <dbReference type="EC" id="4.1.99.17"/>
    </reaction>
</comment>
<comment type="cofactor">
    <cofactor evidence="1">
        <name>[4Fe-4S] cluster</name>
        <dbReference type="ChEBI" id="CHEBI:49883"/>
    </cofactor>
    <text evidence="1">Binds 1 [4Fe-4S] cluster per subunit. The cluster is coordinated with 3 cysteines and an exchangeable S-adenosyl-L-methionine.</text>
</comment>
<comment type="pathway">
    <text evidence="1">Cofactor biosynthesis; thiamine diphosphate biosynthesis.</text>
</comment>
<comment type="similarity">
    <text evidence="1">Belongs to the ThiC family.</text>
</comment>
<sequence length="429" mass="47198">MTQLEYARKGEITPEMEYVAKTENIDVEKLRKNIASGKVVIPKNVHNNTLPTGIGKDLHTKINANIGSSTEMEDINVELEKLDILLKYGADAVMDLSTGPKLHEIRKAIRDKTNIPLGTVPIYEAGVETTSQDKIIVDMDDDIIFKTIINQAKEGVDFITVHCGITQDAIKAVDDSERLMGIVSRGGALTAAWIMHNERENPLYAEYDYLLEICKEHDVTLSLGDGLRPGCIHDATDIAQIRELTTLGRLVKRSQKAGVQVMVEGPGHVPITQVKANMQIQKTICSDAPFYVLGPLVTDVAPGYDHITAAIGASIAGASGADFLCYVTPAEHLCIPNKEHVKQGVIASKIAAEVSDIAKQIPSTMKREYDMAVARDNFDWEKQFELAIDGETARKYYESTSTSDEEMCSMCGDFCAIKMVKDHEKANKN</sequence>
<proteinExistence type="inferred from homology"/>
<gene>
    <name evidence="1" type="primary">thiC1</name>
    <name type="ordered locus">Msp_0228</name>
</gene>